<gene>
    <name evidence="1" type="primary">tsf</name>
    <name type="ordered locus">KPN78578_01820</name>
    <name type="ORF">KPN_00183</name>
</gene>
<keyword id="KW-0963">Cytoplasm</keyword>
<keyword id="KW-0251">Elongation factor</keyword>
<keyword id="KW-0648">Protein biosynthesis</keyword>
<comment type="function">
    <text evidence="1">Associates with the EF-Tu.GDP complex and induces the exchange of GDP to GTP. It remains bound to the aminoacyl-tRNA.EF-Tu.GTP complex up to the GTP hydrolysis stage on the ribosome.</text>
</comment>
<comment type="subcellular location">
    <subcellularLocation>
        <location evidence="1">Cytoplasm</location>
    </subcellularLocation>
</comment>
<comment type="similarity">
    <text evidence="1">Belongs to the EF-Ts family.</text>
</comment>
<reference key="1">
    <citation type="submission" date="2006-09" db="EMBL/GenBank/DDBJ databases">
        <authorList>
            <consortium name="The Klebsiella pneumonia Genome Sequencing Project"/>
            <person name="McClelland M."/>
            <person name="Sanderson E.K."/>
            <person name="Spieth J."/>
            <person name="Clifton W.S."/>
            <person name="Latreille P."/>
            <person name="Sabo A."/>
            <person name="Pepin K."/>
            <person name="Bhonagiri V."/>
            <person name="Porwollik S."/>
            <person name="Ali J."/>
            <person name="Wilson R.K."/>
        </authorList>
    </citation>
    <scope>NUCLEOTIDE SEQUENCE [LARGE SCALE GENOMIC DNA]</scope>
    <source>
        <strain>ATCC 700721 / MGH 78578</strain>
    </source>
</reference>
<sequence length="283" mass="30450">MAEITASLVKELRERTGAGMMDCKKALTEANGDIELAIENMRKSGAIKAAKKAGNVAADGVIKTKIEGNYGYILEVNCQTDFVAKDGGFQAFADKVLDAAVAGKISDVEVLKAQFEEERVALVAKIGENINIRRIAVLEGDVLGSYQHGARIGVLVAAKGADEELVKQLAMHVAASKPEFVKPEDVSAEVVEKEYQVQLDIAMQSGKPKEIAEKMVEGRMKKFTGEVSLTGQPFVMEPSKSVGQLLKEHNADVTGFIRFEVGEGIEKVETDFAAEVAAMSKQS</sequence>
<accession>A6T4X2</accession>
<evidence type="ECO:0000255" key="1">
    <source>
        <dbReference type="HAMAP-Rule" id="MF_00050"/>
    </source>
</evidence>
<name>EFTS_KLEP7</name>
<feature type="chain" id="PRO_1000006110" description="Elongation factor Ts">
    <location>
        <begin position="1"/>
        <end position="283"/>
    </location>
</feature>
<feature type="region of interest" description="Involved in Mg(2+) ion dislocation from EF-Tu" evidence="1">
    <location>
        <begin position="80"/>
        <end position="83"/>
    </location>
</feature>
<protein>
    <recommendedName>
        <fullName evidence="1">Elongation factor Ts</fullName>
        <shortName evidence="1">EF-Ts</shortName>
    </recommendedName>
</protein>
<dbReference type="EMBL" id="CP000647">
    <property type="protein sequence ID" value="ABR75643.1"/>
    <property type="molecule type" value="Genomic_DNA"/>
</dbReference>
<dbReference type="RefSeq" id="WP_004151930.1">
    <property type="nucleotide sequence ID" value="NC_009648.1"/>
</dbReference>
<dbReference type="SMR" id="A6T4X2"/>
<dbReference type="STRING" id="272620.KPN_00183"/>
<dbReference type="jPOST" id="A6T4X2"/>
<dbReference type="PaxDb" id="272620-KPN_00183"/>
<dbReference type="EnsemblBacteria" id="ABR75643">
    <property type="protein sequence ID" value="ABR75643"/>
    <property type="gene ID" value="KPN_00183"/>
</dbReference>
<dbReference type="GeneID" id="93274921"/>
<dbReference type="KEGG" id="kpn:KPN_00183"/>
<dbReference type="HOGENOM" id="CLU_047155_0_2_6"/>
<dbReference type="Proteomes" id="UP000000265">
    <property type="component" value="Chromosome"/>
</dbReference>
<dbReference type="GO" id="GO:0005737">
    <property type="term" value="C:cytoplasm"/>
    <property type="evidence" value="ECO:0007669"/>
    <property type="project" value="UniProtKB-SubCell"/>
</dbReference>
<dbReference type="GO" id="GO:0003746">
    <property type="term" value="F:translation elongation factor activity"/>
    <property type="evidence" value="ECO:0007669"/>
    <property type="project" value="UniProtKB-UniRule"/>
</dbReference>
<dbReference type="CDD" id="cd14275">
    <property type="entry name" value="UBA_EF-Ts"/>
    <property type="match status" value="1"/>
</dbReference>
<dbReference type="FunFam" id="1.10.286.20:FF:000001">
    <property type="entry name" value="Elongation factor Ts"/>
    <property type="match status" value="1"/>
</dbReference>
<dbReference type="FunFam" id="1.10.8.10:FF:000001">
    <property type="entry name" value="Elongation factor Ts"/>
    <property type="match status" value="1"/>
</dbReference>
<dbReference type="FunFam" id="3.30.479.20:FF:000001">
    <property type="entry name" value="Elongation factor Ts"/>
    <property type="match status" value="1"/>
</dbReference>
<dbReference type="Gene3D" id="1.10.286.20">
    <property type="match status" value="1"/>
</dbReference>
<dbReference type="Gene3D" id="1.10.8.10">
    <property type="entry name" value="DNA helicase RuvA subunit, C-terminal domain"/>
    <property type="match status" value="1"/>
</dbReference>
<dbReference type="Gene3D" id="3.30.479.20">
    <property type="entry name" value="Elongation factor Ts, dimerisation domain"/>
    <property type="match status" value="2"/>
</dbReference>
<dbReference type="HAMAP" id="MF_00050">
    <property type="entry name" value="EF_Ts"/>
    <property type="match status" value="1"/>
</dbReference>
<dbReference type="InterPro" id="IPR036402">
    <property type="entry name" value="EF-Ts_dimer_sf"/>
</dbReference>
<dbReference type="InterPro" id="IPR001816">
    <property type="entry name" value="Transl_elong_EFTs/EF1B"/>
</dbReference>
<dbReference type="InterPro" id="IPR014039">
    <property type="entry name" value="Transl_elong_EFTs/EF1B_dimer"/>
</dbReference>
<dbReference type="InterPro" id="IPR018101">
    <property type="entry name" value="Transl_elong_Ts_CS"/>
</dbReference>
<dbReference type="InterPro" id="IPR009060">
    <property type="entry name" value="UBA-like_sf"/>
</dbReference>
<dbReference type="NCBIfam" id="TIGR00116">
    <property type="entry name" value="tsf"/>
    <property type="match status" value="1"/>
</dbReference>
<dbReference type="PANTHER" id="PTHR11741">
    <property type="entry name" value="ELONGATION FACTOR TS"/>
    <property type="match status" value="1"/>
</dbReference>
<dbReference type="PANTHER" id="PTHR11741:SF0">
    <property type="entry name" value="ELONGATION FACTOR TS, MITOCHONDRIAL"/>
    <property type="match status" value="1"/>
</dbReference>
<dbReference type="Pfam" id="PF00889">
    <property type="entry name" value="EF_TS"/>
    <property type="match status" value="1"/>
</dbReference>
<dbReference type="SUPFAM" id="SSF54713">
    <property type="entry name" value="Elongation factor Ts (EF-Ts), dimerisation domain"/>
    <property type="match status" value="2"/>
</dbReference>
<dbReference type="SUPFAM" id="SSF46934">
    <property type="entry name" value="UBA-like"/>
    <property type="match status" value="1"/>
</dbReference>
<dbReference type="PROSITE" id="PS01126">
    <property type="entry name" value="EF_TS_1"/>
    <property type="match status" value="1"/>
</dbReference>
<dbReference type="PROSITE" id="PS01127">
    <property type="entry name" value="EF_TS_2"/>
    <property type="match status" value="1"/>
</dbReference>
<organism>
    <name type="scientific">Klebsiella pneumoniae subsp. pneumoniae (strain ATCC 700721 / MGH 78578)</name>
    <dbReference type="NCBI Taxonomy" id="272620"/>
    <lineage>
        <taxon>Bacteria</taxon>
        <taxon>Pseudomonadati</taxon>
        <taxon>Pseudomonadota</taxon>
        <taxon>Gammaproteobacteria</taxon>
        <taxon>Enterobacterales</taxon>
        <taxon>Enterobacteriaceae</taxon>
        <taxon>Klebsiella/Raoultella group</taxon>
        <taxon>Klebsiella</taxon>
        <taxon>Klebsiella pneumoniae complex</taxon>
    </lineage>
</organism>
<proteinExistence type="inferred from homology"/>